<name>AL1A1_SHEEP</name>
<organism>
    <name type="scientific">Ovis aries</name>
    <name type="common">Sheep</name>
    <dbReference type="NCBI Taxonomy" id="9940"/>
    <lineage>
        <taxon>Eukaryota</taxon>
        <taxon>Metazoa</taxon>
        <taxon>Chordata</taxon>
        <taxon>Craniata</taxon>
        <taxon>Vertebrata</taxon>
        <taxon>Euteleostomi</taxon>
        <taxon>Mammalia</taxon>
        <taxon>Eutheria</taxon>
        <taxon>Laurasiatheria</taxon>
        <taxon>Artiodactyla</taxon>
        <taxon>Ruminantia</taxon>
        <taxon>Pecora</taxon>
        <taxon>Bovidae</taxon>
        <taxon>Caprinae</taxon>
        <taxon>Ovis</taxon>
    </lineage>
</organism>
<gene>
    <name evidence="12" type="primary">ALDH1A1</name>
    <name evidence="12" type="synonym">ALDH1</name>
</gene>
<accession>P51977</accession>
<keyword id="KW-0002">3D-structure</keyword>
<keyword id="KW-0007">Acetylation</keyword>
<keyword id="KW-0966">Cell projection</keyword>
<keyword id="KW-0963">Cytoplasm</keyword>
<keyword id="KW-0443">Lipid metabolism</keyword>
<keyword id="KW-0520">NAD</keyword>
<keyword id="KW-0560">Oxidoreductase</keyword>
<keyword id="KW-0597">Phosphoprotein</keyword>
<keyword id="KW-1185">Reference proteome</keyword>
<proteinExistence type="evidence at protein level"/>
<comment type="function">
    <text evidence="1 4 9">Cytosolic dehydrogenase that catalyzes the irreversible oxidation of a wide range of aldehydes to their corresponding carboxylic acid (PubMed:26373694). Functions downstream of retinol dehydrogenases and catalyzes the oxidation of retinaldehyde into retinoic acid, the second step in the oxidation of retinol/vitamin A into retinoic acid. This pathway is crucial to control the levels of retinol and retinoic acid, two important molecules which excess can be teratogenic and cytotoxic (By similarity). Also oxidizes aldehydes resulting from lipid peroxidation like (E)-4-hydroxynon-2-enal/HNE, malonaldehyde and hexanal that form protein adducts and are highly cytotoxic. By participating for instance to the clearance of (E)-4-hydroxynon-2-enal/HNE in the lens epithelium prevents the formation of HNE-protein adducts and lens opacification. Also functions downstream of fructosamine-3-kinase in the fructosamine degradation pathway by catalyzing the oxidation of 3-deoxyglucosone, the carbohydrate product of fructosamine 3-phosphate decomposition, which is itself a potent glycating agent that may react with lysine and arginine side-chains of proteins (By similarity). Also has an aminobutyraldehyde dehydrogenase activity and is probably part of an alternative pathway for the biosynthesis of GABA/4-aminobutanoate in midbrain, thereby playing a role in GABAergic synaptic transmission (By similarity).</text>
</comment>
<comment type="catalytic activity">
    <reaction evidence="9">
        <text>an aldehyde + NAD(+) + H2O = a carboxylate + NADH + 2 H(+)</text>
        <dbReference type="Rhea" id="RHEA:16185"/>
        <dbReference type="ChEBI" id="CHEBI:15377"/>
        <dbReference type="ChEBI" id="CHEBI:15378"/>
        <dbReference type="ChEBI" id="CHEBI:17478"/>
        <dbReference type="ChEBI" id="CHEBI:29067"/>
        <dbReference type="ChEBI" id="CHEBI:57540"/>
        <dbReference type="ChEBI" id="CHEBI:57945"/>
        <dbReference type="EC" id="1.2.1.3"/>
    </reaction>
    <physiologicalReaction direction="left-to-right" evidence="14">
        <dbReference type="Rhea" id="RHEA:16186"/>
    </physiologicalReaction>
</comment>
<comment type="catalytic activity">
    <reaction evidence="5">
        <text>all-trans-retinal + NAD(+) + H2O = all-trans-retinoate + NADH + 2 H(+)</text>
        <dbReference type="Rhea" id="RHEA:42080"/>
        <dbReference type="ChEBI" id="CHEBI:15377"/>
        <dbReference type="ChEBI" id="CHEBI:15378"/>
        <dbReference type="ChEBI" id="CHEBI:17898"/>
        <dbReference type="ChEBI" id="CHEBI:35291"/>
        <dbReference type="ChEBI" id="CHEBI:57540"/>
        <dbReference type="ChEBI" id="CHEBI:57945"/>
        <dbReference type="EC" id="1.2.1.36"/>
    </reaction>
    <physiologicalReaction direction="left-to-right" evidence="5">
        <dbReference type="Rhea" id="RHEA:42081"/>
    </physiologicalReaction>
</comment>
<comment type="catalytic activity">
    <reaction evidence="5">
        <text>9-cis-retinal + NAD(+) + H2O = 9-cis-retinoate + NADH + 2 H(+)</text>
        <dbReference type="Rhea" id="RHEA:42084"/>
        <dbReference type="ChEBI" id="CHEBI:15377"/>
        <dbReference type="ChEBI" id="CHEBI:15378"/>
        <dbReference type="ChEBI" id="CHEBI:57540"/>
        <dbReference type="ChEBI" id="CHEBI:57945"/>
        <dbReference type="ChEBI" id="CHEBI:78273"/>
        <dbReference type="ChEBI" id="CHEBI:78630"/>
    </reaction>
    <physiologicalReaction direction="left-to-right" evidence="5">
        <dbReference type="Rhea" id="RHEA:42085"/>
    </physiologicalReaction>
</comment>
<comment type="catalytic activity">
    <reaction evidence="5">
        <text>11-cis-retinal + NAD(+) + H2O = 11-cis-retinoate + NADH + 2 H(+)</text>
        <dbReference type="Rhea" id="RHEA:47132"/>
        <dbReference type="ChEBI" id="CHEBI:15377"/>
        <dbReference type="ChEBI" id="CHEBI:15378"/>
        <dbReference type="ChEBI" id="CHEBI:16066"/>
        <dbReference type="ChEBI" id="CHEBI:57540"/>
        <dbReference type="ChEBI" id="CHEBI:57945"/>
        <dbReference type="ChEBI" id="CHEBI:87435"/>
    </reaction>
    <physiologicalReaction direction="left-to-right" evidence="5">
        <dbReference type="Rhea" id="RHEA:47133"/>
    </physiologicalReaction>
</comment>
<comment type="catalytic activity">
    <reaction evidence="6">
        <text>13-cis-retinal + NAD(+) + H2O = 13-cis-retinoate + NADH + 2 H(+)</text>
        <dbReference type="Rhea" id="RHEA:67332"/>
        <dbReference type="ChEBI" id="CHEBI:15377"/>
        <dbReference type="ChEBI" id="CHEBI:15378"/>
        <dbReference type="ChEBI" id="CHEBI:45487"/>
        <dbReference type="ChEBI" id="CHEBI:57540"/>
        <dbReference type="ChEBI" id="CHEBI:57945"/>
        <dbReference type="ChEBI" id="CHEBI:169952"/>
    </reaction>
    <physiologicalReaction direction="left-to-right" evidence="6">
        <dbReference type="Rhea" id="RHEA:67333"/>
    </physiologicalReaction>
</comment>
<comment type="catalytic activity">
    <reaction evidence="1">
        <text>3-deoxyglucosone + NAD(+) + H2O = 2-dehydro-3-deoxy-D-gluconate + NADH + 2 H(+)</text>
        <dbReference type="Rhea" id="RHEA:67244"/>
        <dbReference type="ChEBI" id="CHEBI:15377"/>
        <dbReference type="ChEBI" id="CHEBI:15378"/>
        <dbReference type="ChEBI" id="CHEBI:57540"/>
        <dbReference type="ChEBI" id="CHEBI:57945"/>
        <dbReference type="ChEBI" id="CHEBI:57990"/>
        <dbReference type="ChEBI" id="CHEBI:60777"/>
    </reaction>
    <physiologicalReaction direction="left-to-right" evidence="1">
        <dbReference type="Rhea" id="RHEA:67245"/>
    </physiologicalReaction>
</comment>
<comment type="catalytic activity">
    <reaction evidence="1">
        <text>(E)-4-hydroxynon-2-enal + NAD(+) + H2O = (E)-4-hydroxynon-2-enoate + NADH + 2 H(+)</text>
        <dbReference type="Rhea" id="RHEA:67248"/>
        <dbReference type="ChEBI" id="CHEBI:15377"/>
        <dbReference type="ChEBI" id="CHEBI:15378"/>
        <dbReference type="ChEBI" id="CHEBI:57540"/>
        <dbReference type="ChEBI" id="CHEBI:57945"/>
        <dbReference type="ChEBI" id="CHEBI:58968"/>
        <dbReference type="ChEBI" id="CHEBI:142920"/>
    </reaction>
    <physiologicalReaction direction="left-to-right" evidence="1">
        <dbReference type="Rhea" id="RHEA:67249"/>
    </physiologicalReaction>
</comment>
<comment type="catalytic activity">
    <reaction evidence="1">
        <text>malonaldehyde + NAD(+) + H2O = 3-oxopropanoate + NADH + 2 H(+)</text>
        <dbReference type="Rhea" id="RHEA:67252"/>
        <dbReference type="ChEBI" id="CHEBI:15377"/>
        <dbReference type="ChEBI" id="CHEBI:15378"/>
        <dbReference type="ChEBI" id="CHEBI:33190"/>
        <dbReference type="ChEBI" id="CHEBI:57540"/>
        <dbReference type="ChEBI" id="CHEBI:57945"/>
        <dbReference type="ChEBI" id="CHEBI:566274"/>
    </reaction>
    <physiologicalReaction direction="left-to-right" evidence="1">
        <dbReference type="Rhea" id="RHEA:67253"/>
    </physiologicalReaction>
</comment>
<comment type="catalytic activity">
    <reaction evidence="1">
        <text>hexanal + NAD(+) + H2O = hexanoate + NADH + 2 H(+)</text>
        <dbReference type="Rhea" id="RHEA:67276"/>
        <dbReference type="ChEBI" id="CHEBI:15377"/>
        <dbReference type="ChEBI" id="CHEBI:15378"/>
        <dbReference type="ChEBI" id="CHEBI:17120"/>
        <dbReference type="ChEBI" id="CHEBI:57540"/>
        <dbReference type="ChEBI" id="CHEBI:57945"/>
        <dbReference type="ChEBI" id="CHEBI:88528"/>
    </reaction>
    <physiologicalReaction direction="left-to-right" evidence="1">
        <dbReference type="Rhea" id="RHEA:67277"/>
    </physiologicalReaction>
</comment>
<comment type="catalytic activity">
    <reaction evidence="9">
        <text>propanal + NAD(+) + H2O = propanoate + NADH + 2 H(+)</text>
        <dbReference type="Rhea" id="RHEA:67256"/>
        <dbReference type="ChEBI" id="CHEBI:15377"/>
        <dbReference type="ChEBI" id="CHEBI:15378"/>
        <dbReference type="ChEBI" id="CHEBI:17153"/>
        <dbReference type="ChEBI" id="CHEBI:17272"/>
        <dbReference type="ChEBI" id="CHEBI:57540"/>
        <dbReference type="ChEBI" id="CHEBI:57945"/>
    </reaction>
    <physiologicalReaction direction="left-to-right" evidence="14">
        <dbReference type="Rhea" id="RHEA:67257"/>
    </physiologicalReaction>
</comment>
<comment type="catalytic activity">
    <reaction evidence="1">
        <text>acetaldehyde + NAD(+) + H2O = acetate + NADH + 2 H(+)</text>
        <dbReference type="Rhea" id="RHEA:25294"/>
        <dbReference type="ChEBI" id="CHEBI:15343"/>
        <dbReference type="ChEBI" id="CHEBI:15377"/>
        <dbReference type="ChEBI" id="CHEBI:15378"/>
        <dbReference type="ChEBI" id="CHEBI:30089"/>
        <dbReference type="ChEBI" id="CHEBI:57540"/>
        <dbReference type="ChEBI" id="CHEBI:57945"/>
        <dbReference type="EC" id="1.2.1.3"/>
    </reaction>
    <physiologicalReaction direction="left-to-right" evidence="1">
        <dbReference type="Rhea" id="RHEA:25295"/>
    </physiologicalReaction>
</comment>
<comment type="catalytic activity">
    <reaction evidence="1">
        <text>benzaldehyde + NAD(+) + H2O = benzoate + NADH + 2 H(+)</text>
        <dbReference type="Rhea" id="RHEA:11840"/>
        <dbReference type="ChEBI" id="CHEBI:15377"/>
        <dbReference type="ChEBI" id="CHEBI:15378"/>
        <dbReference type="ChEBI" id="CHEBI:16150"/>
        <dbReference type="ChEBI" id="CHEBI:17169"/>
        <dbReference type="ChEBI" id="CHEBI:57540"/>
        <dbReference type="ChEBI" id="CHEBI:57945"/>
        <dbReference type="EC" id="1.2.1.28"/>
    </reaction>
    <physiologicalReaction direction="left-to-right" evidence="1">
        <dbReference type="Rhea" id="RHEA:11841"/>
    </physiologicalReaction>
</comment>
<comment type="catalytic activity">
    <reaction evidence="4">
        <text>4-aminobutanal + NAD(+) + H2O = 4-aminobutanoate + NADH + 2 H(+)</text>
        <dbReference type="Rhea" id="RHEA:19105"/>
        <dbReference type="ChEBI" id="CHEBI:15377"/>
        <dbReference type="ChEBI" id="CHEBI:15378"/>
        <dbReference type="ChEBI" id="CHEBI:57540"/>
        <dbReference type="ChEBI" id="CHEBI:57945"/>
        <dbReference type="ChEBI" id="CHEBI:58264"/>
        <dbReference type="ChEBI" id="CHEBI:59888"/>
        <dbReference type="EC" id="1.2.1.19"/>
    </reaction>
    <physiologicalReaction direction="left-to-right" evidence="4">
        <dbReference type="Rhea" id="RHEA:19106"/>
    </physiologicalReaction>
</comment>
<comment type="activity regulation">
    <text evidence="9">Inhibited by duocarmycin analogs.</text>
</comment>
<comment type="pathway">
    <text evidence="5">Cofactor metabolism; retinol metabolism.</text>
</comment>
<comment type="subunit">
    <text evidence="1 9 10">Homotetramer (PubMed:26373694, PubMed:9862807). Interacts with PRMT3; the interaction is direct, inhibits ALDH1A1 aldehyde dehydrogenase activity and is independent of the methyltransferase activity of PRMT3 (By similarity).</text>
</comment>
<comment type="subcellular location">
    <subcellularLocation>
        <location evidence="1">Cytoplasm</location>
        <location evidence="1">Cytosol</location>
    </subcellularLocation>
    <subcellularLocation>
        <location evidence="4">Cell projection</location>
        <location evidence="4">Axon</location>
    </subcellularLocation>
</comment>
<comment type="PTM">
    <text evidence="2">The N-terminus is blocked most probably by acetylation.</text>
</comment>
<comment type="similarity">
    <text evidence="13">Belongs to the aldehyde dehydrogenase family.</text>
</comment>
<feature type="initiator methionine" description="Removed" evidence="2">
    <location>
        <position position="1"/>
    </location>
</feature>
<feature type="chain" id="PRO_0000056420" description="Aldehyde dehydrogenase 1A1">
    <location>
        <begin position="2"/>
        <end position="501"/>
    </location>
</feature>
<feature type="region of interest" description="Mediates interaction with PRMT3" evidence="1">
    <location>
        <begin position="336"/>
        <end position="501"/>
    </location>
</feature>
<feature type="active site" description="Proton acceptor" evidence="7 8">
    <location>
        <position position="269"/>
    </location>
</feature>
<feature type="active site" description="Nucleophile" evidence="12">
    <location>
        <position position="303"/>
    </location>
</feature>
<feature type="binding site" evidence="9 10 15 17">
    <location>
        <begin position="167"/>
        <end position="170"/>
    </location>
    <ligand>
        <name>NAD(+)</name>
        <dbReference type="ChEBI" id="CHEBI:57540"/>
    </ligand>
</feature>
<feature type="binding site" evidence="9 10 15 17">
    <location>
        <begin position="193"/>
        <end position="196"/>
    </location>
    <ligand>
        <name>NAD(+)</name>
        <dbReference type="ChEBI" id="CHEBI:57540"/>
    </ligand>
</feature>
<feature type="binding site" evidence="9 10 15 17">
    <location>
        <begin position="226"/>
        <end position="227"/>
    </location>
    <ligand>
        <name>NAD(+)</name>
        <dbReference type="ChEBI" id="CHEBI:57540"/>
    </ligand>
</feature>
<feature type="binding site" evidence="9 10 15 17">
    <location>
        <begin position="246"/>
        <end position="247"/>
    </location>
    <ligand>
        <name>NAD(+)</name>
        <dbReference type="ChEBI" id="CHEBI:57540"/>
    </ligand>
</feature>
<feature type="binding site" evidence="9 17">
    <location>
        <begin position="269"/>
        <end position="271"/>
    </location>
    <ligand>
        <name>NAD(+)</name>
        <dbReference type="ChEBI" id="CHEBI:57540"/>
    </ligand>
</feature>
<feature type="binding site" evidence="9 10 15 17">
    <location>
        <begin position="349"/>
        <end position="353"/>
    </location>
    <ligand>
        <name>NAD(+)</name>
        <dbReference type="ChEBI" id="CHEBI:57540"/>
    </ligand>
</feature>
<feature type="binding site" evidence="9 10 15 17">
    <location>
        <begin position="400"/>
        <end position="402"/>
    </location>
    <ligand>
        <name>NAD(+)</name>
        <dbReference type="ChEBI" id="CHEBI:57540"/>
    </ligand>
</feature>
<feature type="site" description="Transition state stabilizer" evidence="3">
    <location>
        <position position="170"/>
    </location>
</feature>
<feature type="modified residue" description="N-acetylserine" evidence="2">
    <location>
        <position position="2"/>
    </location>
</feature>
<feature type="modified residue" description="N6-acetyllysine" evidence="1">
    <location>
        <position position="91"/>
    </location>
</feature>
<feature type="modified residue" description="N6-acetyllysine" evidence="1">
    <location>
        <position position="128"/>
    </location>
</feature>
<feature type="modified residue" description="N6-acetyllysine" evidence="1">
    <location>
        <position position="252"/>
    </location>
</feature>
<feature type="modified residue" description="Phosphothreonine" evidence="1">
    <location>
        <position position="337"/>
    </location>
</feature>
<feature type="modified residue" description="N6-acetyllysine" evidence="1">
    <location>
        <position position="353"/>
    </location>
</feature>
<feature type="modified residue" description="N6-acetyllysine" evidence="1">
    <location>
        <position position="367"/>
    </location>
</feature>
<feature type="modified residue" description="N6-acetyllysine" evidence="1">
    <location>
        <position position="410"/>
    </location>
</feature>
<feature type="modified residue" description="Phosphoserine" evidence="1">
    <location>
        <position position="413"/>
    </location>
</feature>
<feature type="modified residue" description="N6-acetyllysine" evidence="1">
    <location>
        <position position="419"/>
    </location>
</feature>
<feature type="modified residue" description="N6-acetyllysine" evidence="1">
    <location>
        <position position="495"/>
    </location>
</feature>
<feature type="strand" evidence="20">
    <location>
        <begin position="22"/>
        <end position="25"/>
    </location>
</feature>
<feature type="strand" evidence="20">
    <location>
        <begin position="28"/>
        <end position="30"/>
    </location>
</feature>
<feature type="strand" evidence="20">
    <location>
        <begin position="37"/>
        <end position="41"/>
    </location>
</feature>
<feature type="turn" evidence="20">
    <location>
        <begin position="43"/>
        <end position="45"/>
    </location>
</feature>
<feature type="strand" evidence="20">
    <location>
        <begin position="48"/>
        <end position="53"/>
    </location>
</feature>
<feature type="helix" evidence="20">
    <location>
        <begin position="57"/>
        <end position="70"/>
    </location>
</feature>
<feature type="helix" evidence="20">
    <location>
        <begin position="76"/>
        <end position="79"/>
    </location>
</feature>
<feature type="helix" evidence="20">
    <location>
        <begin position="82"/>
        <end position="98"/>
    </location>
</feature>
<feature type="helix" evidence="20">
    <location>
        <begin position="100"/>
        <end position="111"/>
    </location>
</feature>
<feature type="helix" evidence="20">
    <location>
        <begin position="115"/>
        <end position="120"/>
    </location>
</feature>
<feature type="helix" evidence="20">
    <location>
        <begin position="122"/>
        <end position="136"/>
    </location>
</feature>
<feature type="helix" evidence="20">
    <location>
        <begin position="137"/>
        <end position="139"/>
    </location>
</feature>
<feature type="strand" evidence="19">
    <location>
        <begin position="142"/>
        <end position="145"/>
    </location>
</feature>
<feature type="strand" evidence="20">
    <location>
        <begin position="148"/>
        <end position="159"/>
    </location>
</feature>
<feature type="strand" evidence="20">
    <location>
        <begin position="162"/>
        <end position="166"/>
    </location>
</feature>
<feature type="strand" evidence="20">
    <location>
        <begin position="169"/>
        <end position="171"/>
    </location>
</feature>
<feature type="helix" evidence="20">
    <location>
        <begin position="172"/>
        <end position="185"/>
    </location>
</feature>
<feature type="strand" evidence="20">
    <location>
        <begin position="189"/>
        <end position="193"/>
    </location>
</feature>
<feature type="helix" evidence="20">
    <location>
        <begin position="200"/>
        <end position="212"/>
    </location>
</feature>
<feature type="strand" evidence="20">
    <location>
        <begin position="218"/>
        <end position="221"/>
    </location>
</feature>
<feature type="turn" evidence="20">
    <location>
        <begin position="226"/>
        <end position="228"/>
    </location>
</feature>
<feature type="helix" evidence="20">
    <location>
        <begin position="229"/>
        <end position="234"/>
    </location>
</feature>
<feature type="strand" evidence="20">
    <location>
        <begin position="241"/>
        <end position="246"/>
    </location>
</feature>
<feature type="helix" evidence="20">
    <location>
        <begin position="248"/>
        <end position="260"/>
    </location>
</feature>
<feature type="strand" evidence="20">
    <location>
        <begin position="265"/>
        <end position="269"/>
    </location>
</feature>
<feature type="strand" evidence="20">
    <location>
        <begin position="275"/>
        <end position="278"/>
    </location>
</feature>
<feature type="helix" evidence="20">
    <location>
        <begin position="284"/>
        <end position="296"/>
    </location>
</feature>
<feature type="helix" evidence="20">
    <location>
        <begin position="297"/>
        <end position="300"/>
    </location>
</feature>
<feature type="strand" evidence="20">
    <location>
        <begin position="308"/>
        <end position="312"/>
    </location>
</feature>
<feature type="helix" evidence="20">
    <location>
        <begin position="313"/>
        <end position="327"/>
    </location>
</feature>
<feature type="helix" evidence="20">
    <location>
        <begin position="348"/>
        <end position="364"/>
    </location>
</feature>
<feature type="strand" evidence="20">
    <location>
        <begin position="367"/>
        <end position="370"/>
    </location>
</feature>
<feature type="strand" evidence="20">
    <location>
        <begin position="373"/>
        <end position="379"/>
    </location>
</feature>
<feature type="strand" evidence="20">
    <location>
        <begin position="385"/>
        <end position="389"/>
    </location>
</feature>
<feature type="helix" evidence="20">
    <location>
        <begin position="395"/>
        <end position="398"/>
    </location>
</feature>
<feature type="strand" evidence="20">
    <location>
        <begin position="403"/>
        <end position="411"/>
    </location>
</feature>
<feature type="helix" evidence="20">
    <location>
        <begin position="414"/>
        <end position="422"/>
    </location>
</feature>
<feature type="strand" evidence="20">
    <location>
        <begin position="428"/>
        <end position="433"/>
    </location>
</feature>
<feature type="helix" evidence="20">
    <location>
        <begin position="437"/>
        <end position="446"/>
    </location>
</feature>
<feature type="strand" evidence="20">
    <location>
        <begin position="450"/>
        <end position="455"/>
    </location>
</feature>
<feature type="helix" evidence="20">
    <location>
        <begin position="470"/>
        <end position="472"/>
    </location>
</feature>
<feature type="strand" evidence="20">
    <location>
        <begin position="473"/>
        <end position="475"/>
    </location>
</feature>
<feature type="helix" evidence="20">
    <location>
        <begin position="479"/>
        <end position="484"/>
    </location>
</feature>
<feature type="strand" evidence="20">
    <location>
        <begin position="487"/>
        <end position="495"/>
    </location>
</feature>
<protein>
    <recommendedName>
        <fullName evidence="14">Aldehyde dehydrogenase 1A1</fullName>
        <ecNumber evidence="4">1.2.1.19</ecNumber>
        <ecNumber evidence="1">1.2.1.28</ecNumber>
        <ecNumber evidence="9">1.2.1.3</ecNumber>
        <ecNumber evidence="5">1.2.1.36</ecNumber>
    </recommendedName>
    <alternativeName>
        <fullName evidence="1">3-deoxyglucosone dehydrogenase</fullName>
    </alternativeName>
    <alternativeName>
        <fullName>ALDH-E1</fullName>
    </alternativeName>
    <alternativeName>
        <fullName>ALHDII</fullName>
    </alternativeName>
    <alternativeName>
        <fullName evidence="12">Aldehyde dehydrogenase family 1 member A1</fullName>
    </alternativeName>
    <alternativeName>
        <fullName evidence="11">Aldehyde dehydrogenase, cytosolic</fullName>
    </alternativeName>
    <alternativeName>
        <fullName evidence="13">Retinal dehydrogenase 1</fullName>
        <shortName evidence="13">RALDH 1</shortName>
        <shortName evidence="13">RalDH1</shortName>
    </alternativeName>
</protein>
<evidence type="ECO:0000250" key="1">
    <source>
        <dbReference type="UniProtKB" id="P00352"/>
    </source>
</evidence>
<evidence type="ECO:0000250" key="2">
    <source>
        <dbReference type="UniProtKB" id="P15437"/>
    </source>
</evidence>
<evidence type="ECO:0000250" key="3">
    <source>
        <dbReference type="UniProtKB" id="P20000"/>
    </source>
</evidence>
<evidence type="ECO:0000250" key="4">
    <source>
        <dbReference type="UniProtKB" id="P24549"/>
    </source>
</evidence>
<evidence type="ECO:0000250" key="5">
    <source>
        <dbReference type="UniProtKB" id="P51647"/>
    </source>
</evidence>
<evidence type="ECO:0000250" key="6">
    <source>
        <dbReference type="UniProtKB" id="Q8HYE4"/>
    </source>
</evidence>
<evidence type="ECO:0000255" key="7">
    <source>
        <dbReference type="PROSITE-ProRule" id="PRU10007"/>
    </source>
</evidence>
<evidence type="ECO:0000255" key="8">
    <source>
        <dbReference type="PROSITE-ProRule" id="PRU10008"/>
    </source>
</evidence>
<evidence type="ECO:0000269" key="9">
    <source>
    </source>
</evidence>
<evidence type="ECO:0000269" key="10">
    <source>
    </source>
</evidence>
<evidence type="ECO:0000303" key="11">
    <source>
    </source>
</evidence>
<evidence type="ECO:0000303" key="12">
    <source>
    </source>
</evidence>
<evidence type="ECO:0000305" key="13"/>
<evidence type="ECO:0000305" key="14">
    <source>
    </source>
</evidence>
<evidence type="ECO:0007744" key="15">
    <source>
        <dbReference type="PDB" id="1BXS"/>
    </source>
</evidence>
<evidence type="ECO:0007744" key="16">
    <source>
        <dbReference type="PDB" id="5ABM"/>
    </source>
</evidence>
<evidence type="ECO:0007744" key="17">
    <source>
        <dbReference type="PDB" id="5AC0"/>
    </source>
</evidence>
<evidence type="ECO:0007744" key="18">
    <source>
        <dbReference type="PDB" id="5AC1"/>
    </source>
</evidence>
<evidence type="ECO:0007829" key="19">
    <source>
        <dbReference type="PDB" id="1BXS"/>
    </source>
</evidence>
<evidence type="ECO:0007829" key="20">
    <source>
        <dbReference type="PDB" id="5ABM"/>
    </source>
</evidence>
<sequence length="501" mass="54825">MSSSAMPDVPAPLTNLQFKYTKIFINNEWHSSVSGKKFPVFNPATEEKLCEVEEGDKEDVDKAVKAARQAFQIGSPWRTMDASERGRLLNKLADLIERDRLLLATMEAMNGGKLFSNAYLMDLGGCIKTLRYCAGWADKIQGRTIPMDGNFFTYTRSEPVGVCGQIIPWNFPLLMFLWKIGPALSCGNTVVVKPAEQTPLTALHMGSLIKEAGFPPGVVNIVPGYGPTAGAAISSHMDVDKVAFTGSTEVGKLIKEAAGKSNLKRVSLELGGKSPCIVFADADLDNAVEFAHQGVFYHQGQCCIAASRLFVEESIYDEFVRRSVERAKKYVLGNPLTPGVSQGPQIDKEQYEKILDLIESGKKEGAKLECGGGPWGNKGYFIQPTVFSDVTDDMRIAKEEIFGPVQQIMKFKSLDDVIKRANNTFYGLSAGIFTNDIDKAITVSSALQSGTVWVNCYSVVSAQCPFGGFKMSGNGRELGEYGFHEYTEVKTVTIKISQKNS</sequence>
<reference key="1">
    <citation type="journal article" date="1995" name="Adv. Exp. Med. Biol.">
        <title>Cloning and characterisation of the cDNA for sheep liver cytosolic aldehyde dehydrogenase.</title>
        <authorList>
            <person name="Stayner C.K."/>
            <person name="Tweedie J.W."/>
        </authorList>
    </citation>
    <scope>NUCLEOTIDE SEQUENCE [MRNA]</scope>
    <source>
        <tissue>Liver</tissue>
    </source>
</reference>
<reference evidence="15" key="2">
    <citation type="journal article" date="1998" name="Structure">
        <title>Sheep liver cytosolic aldehyde dehydrogenase: the structure reveals the basis for the retinal specificity of class 1 aldehyde dehydrogenases.</title>
        <authorList>
            <person name="Moore S.A."/>
            <person name="Baker H.M."/>
            <person name="Blythe T.J."/>
            <person name="Kitson K.E."/>
            <person name="Kitson T.M."/>
            <person name="Baker E.N."/>
        </authorList>
    </citation>
    <scope>X-RAY CRYSTALLOGRAPHY (2.35 ANGSTROMS) IN COMPLEX WITH NAD</scope>
    <scope>SUBUNIT</scope>
    <scope>ACTIVE SITE</scope>
</reference>
<reference evidence="16 17 18" key="3">
    <citation type="journal article" date="2015" name="Angew. Chem. Int. Ed. Engl.">
        <title>Structural, biochemical, and computational studies reveal the mechanism of selective aldehyde dehydrogenase 1A1 inhibition by cytotoxic duocarmycin analogues.</title>
        <authorList>
            <person name="Koch M.F."/>
            <person name="Harteis S."/>
            <person name="Blank I.D."/>
            <person name="Pestel G."/>
            <person name="Tietze L.F."/>
            <person name="Ochsenfeld C."/>
            <person name="Schneider S."/>
            <person name="Sieber S.A."/>
        </authorList>
    </citation>
    <scope>X-RAY CRYSTALLOGRAPHY (1.70 ANGSTROMS) OF 2-501 IN COMPLEX WITH DUOCARMYCIN ANALOG AND NAD</scope>
    <scope>SUBUNIT</scope>
    <scope>CATALYTIC ACTIVITY</scope>
    <scope>ACTIVITY REGULATION</scope>
</reference>
<dbReference type="EC" id="1.2.1.19" evidence="4"/>
<dbReference type="EC" id="1.2.1.28" evidence="1"/>
<dbReference type="EC" id="1.2.1.3" evidence="9"/>
<dbReference type="EC" id="1.2.1.36" evidence="5"/>
<dbReference type="EMBL" id="U12761">
    <property type="protein sequence ID" value="AAA85435.1"/>
    <property type="molecule type" value="mRNA"/>
</dbReference>
<dbReference type="PIR" id="S78582">
    <property type="entry name" value="S14752"/>
</dbReference>
<dbReference type="RefSeq" id="NP_001009778.1">
    <property type="nucleotide sequence ID" value="NM_001009778.1"/>
</dbReference>
<dbReference type="PDB" id="1BXS">
    <property type="method" value="X-ray"/>
    <property type="resolution" value="2.35 A"/>
    <property type="chains" value="A/B/C/D=1-501"/>
</dbReference>
<dbReference type="PDB" id="5ABM">
    <property type="method" value="X-ray"/>
    <property type="resolution" value="1.70 A"/>
    <property type="chains" value="A/B/C/D=2-501"/>
</dbReference>
<dbReference type="PDB" id="5AC0">
    <property type="method" value="X-ray"/>
    <property type="resolution" value="1.90 A"/>
    <property type="chains" value="A/B=1-501"/>
</dbReference>
<dbReference type="PDB" id="5AC1">
    <property type="method" value="X-ray"/>
    <property type="resolution" value="2.08 A"/>
    <property type="chains" value="A/B/C/D=1-501"/>
</dbReference>
<dbReference type="PDBsum" id="1BXS"/>
<dbReference type="PDBsum" id="5ABM"/>
<dbReference type="PDBsum" id="5AC0"/>
<dbReference type="PDBsum" id="5AC1"/>
<dbReference type="SMR" id="P51977"/>
<dbReference type="STRING" id="9940.ENSOARP00000013613"/>
<dbReference type="PaxDb" id="9940-ENSOARP00000013613"/>
<dbReference type="Ensembl" id="ENSOART00020021782">
    <property type="protein sequence ID" value="ENSOARP00020018030"/>
    <property type="gene ID" value="ENSOARG00020014246"/>
</dbReference>
<dbReference type="Ensembl" id="ENSOART00025030457">
    <property type="protein sequence ID" value="ENSOARP00025015116"/>
    <property type="gene ID" value="ENSOARG00025018472"/>
</dbReference>
<dbReference type="Ensembl" id="ENSOART00040018879">
    <property type="protein sequence ID" value="ENSOARP00040009133"/>
    <property type="gene ID" value="ENSOARG00040011717"/>
</dbReference>
<dbReference type="Ensembl" id="ENSOART00185011009">
    <property type="protein sequence ID" value="ENSOARP00185005398"/>
    <property type="gene ID" value="ENSOARG00185006791"/>
</dbReference>
<dbReference type="Ensembl" id="ENSOART00215033807">
    <property type="protein sequence ID" value="ENSOARP00215017776"/>
    <property type="gene ID" value="ENSOARG00215020132"/>
</dbReference>
<dbReference type="Ensembl" id="ENSOART00220063956">
    <property type="protein sequence ID" value="ENSOARP00220034207"/>
    <property type="gene ID" value="ENSOARG00220038637"/>
</dbReference>
<dbReference type="Ensembl" id="ENSOART00225058291">
    <property type="protein sequence ID" value="ENSOARP00225028924"/>
    <property type="gene ID" value="ENSOARG00225035343"/>
</dbReference>
<dbReference type="Ensembl" id="ENSOART00260012384">
    <property type="protein sequence ID" value="ENSOARP00260005988"/>
    <property type="gene ID" value="ENSOARG00260007718"/>
</dbReference>
<dbReference type="GeneID" id="443343"/>
<dbReference type="KEGG" id="oas:443343"/>
<dbReference type="CTD" id="216"/>
<dbReference type="eggNOG" id="KOG2450">
    <property type="taxonomic scope" value="Eukaryota"/>
</dbReference>
<dbReference type="HOGENOM" id="CLU_005391_0_1_1"/>
<dbReference type="OMA" id="TKAVWIT"/>
<dbReference type="OrthoDB" id="310895at2759"/>
<dbReference type="UniPathway" id="UPA00912"/>
<dbReference type="EvolutionaryTrace" id="P51977"/>
<dbReference type="Proteomes" id="UP000002356">
    <property type="component" value="Chromosome 2"/>
</dbReference>
<dbReference type="Bgee" id="ENSOARG00000012705">
    <property type="expression patterns" value="Expressed in adrenal cortex and 52 other cell types or tissues"/>
</dbReference>
<dbReference type="GO" id="GO:0030424">
    <property type="term" value="C:axon"/>
    <property type="evidence" value="ECO:0000250"/>
    <property type="project" value="UniProtKB"/>
</dbReference>
<dbReference type="GO" id="GO:0005829">
    <property type="term" value="C:cytosol"/>
    <property type="evidence" value="ECO:0000250"/>
    <property type="project" value="UniProtKB"/>
</dbReference>
<dbReference type="GO" id="GO:0045202">
    <property type="term" value="C:synapse"/>
    <property type="evidence" value="ECO:0000250"/>
    <property type="project" value="UniProtKB"/>
</dbReference>
<dbReference type="GO" id="GO:0106373">
    <property type="term" value="F:3-deoxyglucosone dehydrogenase activity"/>
    <property type="evidence" value="ECO:0000250"/>
    <property type="project" value="UniProtKB"/>
</dbReference>
<dbReference type="GO" id="GO:0140087">
    <property type="term" value="F:acetaldehyde dehydrogenase (NAD+) activity"/>
    <property type="evidence" value="ECO:0007669"/>
    <property type="project" value="RHEA"/>
</dbReference>
<dbReference type="GO" id="GO:0004029">
    <property type="term" value="F:aldehyde dehydrogenase (NAD+) activity"/>
    <property type="evidence" value="ECO:0000314"/>
    <property type="project" value="UniProtKB"/>
</dbReference>
<dbReference type="GO" id="GO:0019145">
    <property type="term" value="F:aminobutyraldehyde dehydrogenase (NAD+) activity"/>
    <property type="evidence" value="ECO:0000250"/>
    <property type="project" value="UniProtKB"/>
</dbReference>
<dbReference type="GO" id="GO:0018479">
    <property type="term" value="F:benzaldehyde dehydrogenase (NAD+) activity"/>
    <property type="evidence" value="ECO:0007669"/>
    <property type="project" value="RHEA"/>
</dbReference>
<dbReference type="GO" id="GO:0051287">
    <property type="term" value="F:NAD binding"/>
    <property type="evidence" value="ECO:0000250"/>
    <property type="project" value="CAFA"/>
</dbReference>
<dbReference type="GO" id="GO:0001758">
    <property type="term" value="F:retinal dehydrogenase activity"/>
    <property type="evidence" value="ECO:0000250"/>
    <property type="project" value="UniProtKB"/>
</dbReference>
<dbReference type="GO" id="GO:0110095">
    <property type="term" value="P:cellular detoxification of aldehyde"/>
    <property type="evidence" value="ECO:0000250"/>
    <property type="project" value="UniProtKB"/>
</dbReference>
<dbReference type="GO" id="GO:0030392">
    <property type="term" value="P:fructosamine catabolic process"/>
    <property type="evidence" value="ECO:0000250"/>
    <property type="project" value="UniProtKB"/>
</dbReference>
<dbReference type="GO" id="GO:0009449">
    <property type="term" value="P:gamma-aminobutyric acid biosynthetic process"/>
    <property type="evidence" value="ECO:0000250"/>
    <property type="project" value="UniProtKB"/>
</dbReference>
<dbReference type="GO" id="GO:0036438">
    <property type="term" value="P:maintenance of lens transparency"/>
    <property type="evidence" value="ECO:0000250"/>
    <property type="project" value="UniProtKB"/>
</dbReference>
<dbReference type="GO" id="GO:0001523">
    <property type="term" value="P:retinoid metabolic process"/>
    <property type="evidence" value="ECO:0000250"/>
    <property type="project" value="UniProtKB"/>
</dbReference>
<dbReference type="GO" id="GO:0042572">
    <property type="term" value="P:retinol metabolic process"/>
    <property type="evidence" value="ECO:0007669"/>
    <property type="project" value="UniProtKB-UniPathway"/>
</dbReference>
<dbReference type="CDD" id="cd07141">
    <property type="entry name" value="ALDH_F1AB_F2_RALDH1"/>
    <property type="match status" value="1"/>
</dbReference>
<dbReference type="FunFam" id="3.40.605.10:FF:000029">
    <property type="entry name" value="Aldehyde dehydrogenase, mitochondrial"/>
    <property type="match status" value="1"/>
</dbReference>
<dbReference type="FunFam" id="3.40.605.10:FF:000026">
    <property type="entry name" value="Aldehyde dehydrogenase, putative"/>
    <property type="match status" value="1"/>
</dbReference>
<dbReference type="FunFam" id="3.40.309.10:FF:000001">
    <property type="entry name" value="Mitochondrial aldehyde dehydrogenase 2"/>
    <property type="match status" value="1"/>
</dbReference>
<dbReference type="Gene3D" id="3.40.605.10">
    <property type="entry name" value="Aldehyde Dehydrogenase, Chain A, domain 1"/>
    <property type="match status" value="1"/>
</dbReference>
<dbReference type="Gene3D" id="3.40.309.10">
    <property type="entry name" value="Aldehyde Dehydrogenase, Chain A, domain 2"/>
    <property type="match status" value="1"/>
</dbReference>
<dbReference type="InterPro" id="IPR016161">
    <property type="entry name" value="Ald_DH/histidinol_DH"/>
</dbReference>
<dbReference type="InterPro" id="IPR016163">
    <property type="entry name" value="Ald_DH_C"/>
</dbReference>
<dbReference type="InterPro" id="IPR016160">
    <property type="entry name" value="Ald_DH_CS_CYS"/>
</dbReference>
<dbReference type="InterPro" id="IPR029510">
    <property type="entry name" value="Ald_DH_CS_GLU"/>
</dbReference>
<dbReference type="InterPro" id="IPR016162">
    <property type="entry name" value="Ald_DH_N"/>
</dbReference>
<dbReference type="InterPro" id="IPR015590">
    <property type="entry name" value="Aldehyde_DH_dom"/>
</dbReference>
<dbReference type="PANTHER" id="PTHR11699">
    <property type="entry name" value="ALDEHYDE DEHYDROGENASE-RELATED"/>
    <property type="match status" value="1"/>
</dbReference>
<dbReference type="Pfam" id="PF00171">
    <property type="entry name" value="Aldedh"/>
    <property type="match status" value="1"/>
</dbReference>
<dbReference type="SUPFAM" id="SSF53720">
    <property type="entry name" value="ALDH-like"/>
    <property type="match status" value="1"/>
</dbReference>
<dbReference type="PROSITE" id="PS00070">
    <property type="entry name" value="ALDEHYDE_DEHYDR_CYS"/>
    <property type="match status" value="1"/>
</dbReference>
<dbReference type="PROSITE" id="PS00687">
    <property type="entry name" value="ALDEHYDE_DEHYDR_GLU"/>
    <property type="match status" value="1"/>
</dbReference>